<sequence>MLESSSDKIKFAPIKEVDYKKPVSKSKNYTLINDIQPLEWYCHNDSETGYQHTISNKTDGGRGLFRVMKKSMETRVETQTLYFTDLHTGLCGFVQLLYSTVMGGIYKGFQLNFKVFGSESNNTDYDVWESFKLDDIAEFQPLKFVSRNVIFEFLSNKNEKLGSIGQLSIKCDLPTCNNTIQNLKIDLLVDLFQGFKMNPNGCNYYFDKQISMSDEFVSSDKMIRHVFVPRGKCNGNISYDKKLNSGDFQNKNISLTDVPVVYLDAVQGLLPNKAASKWNFLCFQSENYSVLAIEFTTPRDHDNVTVTVWSITEKNKLISIGSSVQSPKRHVRFRATSTDKESGWVYPTSIKFPGGFSEHDLRLVNRYDVLGELPSMVRSLAQKIVSIKPFIYQYCQPSKYKHEKGISIVESTFIS</sequence>
<feature type="chain" id="PRO_0000253838" description="SVF1-like protein YDR222W">
    <location>
        <begin position="1"/>
        <end position="415"/>
    </location>
</feature>
<reference key="1">
    <citation type="journal article" date="1997" name="Nature">
        <title>The nucleotide sequence of Saccharomyces cerevisiae chromosome IV.</title>
        <authorList>
            <person name="Jacq C."/>
            <person name="Alt-Moerbe J."/>
            <person name="Andre B."/>
            <person name="Arnold W."/>
            <person name="Bahr A."/>
            <person name="Ballesta J.P.G."/>
            <person name="Bargues M."/>
            <person name="Baron L."/>
            <person name="Becker A."/>
            <person name="Biteau N."/>
            <person name="Bloecker H."/>
            <person name="Blugeon C."/>
            <person name="Boskovic J."/>
            <person name="Brandt P."/>
            <person name="Brueckner M."/>
            <person name="Buitrago M.J."/>
            <person name="Coster F."/>
            <person name="Delaveau T."/>
            <person name="del Rey F."/>
            <person name="Dujon B."/>
            <person name="Eide L.G."/>
            <person name="Garcia-Cantalejo J.M."/>
            <person name="Goffeau A."/>
            <person name="Gomez-Peris A."/>
            <person name="Granotier C."/>
            <person name="Hanemann V."/>
            <person name="Hankeln T."/>
            <person name="Hoheisel J.D."/>
            <person name="Jaeger W."/>
            <person name="Jimenez A."/>
            <person name="Jonniaux J.-L."/>
            <person name="Kraemer C."/>
            <person name="Kuester H."/>
            <person name="Laamanen P."/>
            <person name="Legros Y."/>
            <person name="Louis E.J."/>
            <person name="Moeller-Rieker S."/>
            <person name="Monnet A."/>
            <person name="Moro M."/>
            <person name="Mueller-Auer S."/>
            <person name="Nussbaumer B."/>
            <person name="Paricio N."/>
            <person name="Paulin L."/>
            <person name="Perea J."/>
            <person name="Perez-Alonso M."/>
            <person name="Perez-Ortin J.E."/>
            <person name="Pohl T.M."/>
            <person name="Prydz H."/>
            <person name="Purnelle B."/>
            <person name="Rasmussen S.W."/>
            <person name="Remacha M.A."/>
            <person name="Revuelta J.L."/>
            <person name="Rieger M."/>
            <person name="Salom D."/>
            <person name="Saluz H.P."/>
            <person name="Saiz J.E."/>
            <person name="Saren A.-M."/>
            <person name="Schaefer M."/>
            <person name="Scharfe M."/>
            <person name="Schmidt E.R."/>
            <person name="Schneider C."/>
            <person name="Scholler P."/>
            <person name="Schwarz S."/>
            <person name="Soler-Mira A."/>
            <person name="Urrestarazu L.A."/>
            <person name="Verhasselt P."/>
            <person name="Vissers S."/>
            <person name="Voet M."/>
            <person name="Volckaert G."/>
            <person name="Wagner G."/>
            <person name="Wambutt R."/>
            <person name="Wedler E."/>
            <person name="Wedler H."/>
            <person name="Woelfl S."/>
            <person name="Harris D.E."/>
            <person name="Bowman S."/>
            <person name="Brown D."/>
            <person name="Churcher C.M."/>
            <person name="Connor R."/>
            <person name="Dedman K."/>
            <person name="Gentles S."/>
            <person name="Hamlin N."/>
            <person name="Hunt S."/>
            <person name="Jones L."/>
            <person name="McDonald S."/>
            <person name="Murphy L.D."/>
            <person name="Niblett D."/>
            <person name="Odell C."/>
            <person name="Oliver K."/>
            <person name="Rajandream M.A."/>
            <person name="Richards C."/>
            <person name="Shore L."/>
            <person name="Walsh S.V."/>
            <person name="Barrell B.G."/>
            <person name="Dietrich F.S."/>
            <person name="Mulligan J.T."/>
            <person name="Allen E."/>
            <person name="Araujo R."/>
            <person name="Aviles E."/>
            <person name="Berno A."/>
            <person name="Carpenter J."/>
            <person name="Chen E."/>
            <person name="Cherry J.M."/>
            <person name="Chung E."/>
            <person name="Duncan M."/>
            <person name="Hunicke-Smith S."/>
            <person name="Hyman R.W."/>
            <person name="Komp C."/>
            <person name="Lashkari D."/>
            <person name="Lew H."/>
            <person name="Lin D."/>
            <person name="Mosedale D."/>
            <person name="Nakahara K."/>
            <person name="Namath A."/>
            <person name="Oefner P."/>
            <person name="Oh C."/>
            <person name="Petel F.X."/>
            <person name="Roberts D."/>
            <person name="Schramm S."/>
            <person name="Schroeder M."/>
            <person name="Shogren T."/>
            <person name="Shroff N."/>
            <person name="Winant A."/>
            <person name="Yelton M.A."/>
            <person name="Botstein D."/>
            <person name="Davis R.W."/>
            <person name="Johnston M."/>
            <person name="Andrews S."/>
            <person name="Brinkman R."/>
            <person name="Cooper J."/>
            <person name="Ding H."/>
            <person name="Du Z."/>
            <person name="Favello A."/>
            <person name="Fulton L."/>
            <person name="Gattung S."/>
            <person name="Greco T."/>
            <person name="Hallsworth K."/>
            <person name="Hawkins J."/>
            <person name="Hillier L.W."/>
            <person name="Jier M."/>
            <person name="Johnson D."/>
            <person name="Johnston L."/>
            <person name="Kirsten J."/>
            <person name="Kucaba T."/>
            <person name="Langston Y."/>
            <person name="Latreille P."/>
            <person name="Le T."/>
            <person name="Mardis E."/>
            <person name="Menezes S."/>
            <person name="Miller N."/>
            <person name="Nhan M."/>
            <person name="Pauley A."/>
            <person name="Peluso D."/>
            <person name="Rifkin L."/>
            <person name="Riles L."/>
            <person name="Taich A."/>
            <person name="Trevaskis E."/>
            <person name="Vignati D."/>
            <person name="Wilcox L."/>
            <person name="Wohldman P."/>
            <person name="Vaudin M."/>
            <person name="Wilson R."/>
            <person name="Waterston R."/>
            <person name="Albermann K."/>
            <person name="Hani J."/>
            <person name="Heumann K."/>
            <person name="Kleine K."/>
            <person name="Mewes H.-W."/>
            <person name="Zollner A."/>
            <person name="Zaccaria P."/>
        </authorList>
    </citation>
    <scope>NUCLEOTIDE SEQUENCE [LARGE SCALE GENOMIC DNA]</scope>
    <source>
        <strain>ATCC 204508 / S288c</strain>
    </source>
</reference>
<reference key="2">
    <citation type="journal article" date="2014" name="G3 (Bethesda)">
        <title>The reference genome sequence of Saccharomyces cerevisiae: Then and now.</title>
        <authorList>
            <person name="Engel S.R."/>
            <person name="Dietrich F.S."/>
            <person name="Fisk D.G."/>
            <person name="Binkley G."/>
            <person name="Balakrishnan R."/>
            <person name="Costanzo M.C."/>
            <person name="Dwight S.S."/>
            <person name="Hitz B.C."/>
            <person name="Karra K."/>
            <person name="Nash R.S."/>
            <person name="Weng S."/>
            <person name="Wong E.D."/>
            <person name="Lloyd P."/>
            <person name="Skrzypek M.S."/>
            <person name="Miyasato S.R."/>
            <person name="Simison M."/>
            <person name="Cherry J.M."/>
        </authorList>
    </citation>
    <scope>GENOME REANNOTATION</scope>
    <source>
        <strain>ATCC 204508 / S288c</strain>
    </source>
</reference>
<reference key="3">
    <citation type="journal article" date="2007" name="Genome Res.">
        <title>Approaching a complete repository of sequence-verified protein-encoding clones for Saccharomyces cerevisiae.</title>
        <authorList>
            <person name="Hu Y."/>
            <person name="Rolfs A."/>
            <person name="Bhullar B."/>
            <person name="Murthy T.V.S."/>
            <person name="Zhu C."/>
            <person name="Berger M.F."/>
            <person name="Camargo A.A."/>
            <person name="Kelley F."/>
            <person name="McCarron S."/>
            <person name="Jepson D."/>
            <person name="Richardson A."/>
            <person name="Raphael J."/>
            <person name="Moreira D."/>
            <person name="Taycher E."/>
            <person name="Zuo D."/>
            <person name="Mohr S."/>
            <person name="Kane M.F."/>
            <person name="Williamson J."/>
            <person name="Simpson A.J.G."/>
            <person name="Bulyk M.L."/>
            <person name="Harlow E."/>
            <person name="Marsischky G."/>
            <person name="Kolodner R.D."/>
            <person name="LaBaer J."/>
        </authorList>
    </citation>
    <scope>NUCLEOTIDE SEQUENCE [GENOMIC DNA]</scope>
    <source>
        <strain>ATCC 204508 / S288c</strain>
    </source>
</reference>
<reference key="4">
    <citation type="journal article" date="2003" name="Nature">
        <title>Global analysis of protein localization in budding yeast.</title>
        <authorList>
            <person name="Huh W.-K."/>
            <person name="Falvo J.V."/>
            <person name="Gerke L.C."/>
            <person name="Carroll A.S."/>
            <person name="Howson R.W."/>
            <person name="Weissman J.S."/>
            <person name="O'Shea E.K."/>
        </authorList>
    </citation>
    <scope>SUBCELLULAR LOCATION [LARGE SCALE ANALYSIS]</scope>
</reference>
<reference key="5">
    <citation type="journal article" date="2003" name="Nature">
        <title>Global analysis of protein expression in yeast.</title>
        <authorList>
            <person name="Ghaemmaghami S."/>
            <person name="Huh W.-K."/>
            <person name="Bower K."/>
            <person name="Howson R.W."/>
            <person name="Belle A."/>
            <person name="Dephoure N."/>
            <person name="O'Shea E.K."/>
            <person name="Weissman J.S."/>
        </authorList>
    </citation>
    <scope>LEVEL OF PROTEIN EXPRESSION [LARGE SCALE ANALYSIS]</scope>
</reference>
<protein>
    <recommendedName>
        <fullName>SVF1-like protein YDR222W</fullName>
    </recommendedName>
</protein>
<dbReference type="EMBL" id="Z48612">
    <property type="protein sequence ID" value="CAA88502.1"/>
    <property type="molecule type" value="Genomic_DNA"/>
</dbReference>
<dbReference type="EMBL" id="AY557795">
    <property type="protein sequence ID" value="AAS56121.1"/>
    <property type="molecule type" value="Genomic_DNA"/>
</dbReference>
<dbReference type="EMBL" id="BK006938">
    <property type="protein sequence ID" value="DAA12064.1"/>
    <property type="molecule type" value="Genomic_DNA"/>
</dbReference>
<dbReference type="PIR" id="S59429">
    <property type="entry name" value="S59429"/>
</dbReference>
<dbReference type="RefSeq" id="NP_010508.1">
    <property type="nucleotide sequence ID" value="NM_001180530.1"/>
</dbReference>
<dbReference type="BioGRID" id="32274">
    <property type="interactions" value="43"/>
</dbReference>
<dbReference type="FunCoup" id="Q04925">
    <property type="interactions" value="75"/>
</dbReference>
<dbReference type="IntAct" id="Q04925">
    <property type="interactions" value="5"/>
</dbReference>
<dbReference type="STRING" id="4932.YDR222W"/>
<dbReference type="iPTMnet" id="Q04925"/>
<dbReference type="PaxDb" id="4932-YDR222W"/>
<dbReference type="PeptideAtlas" id="Q04925"/>
<dbReference type="EnsemblFungi" id="YDR222W_mRNA">
    <property type="protein sequence ID" value="YDR222W"/>
    <property type="gene ID" value="YDR222W"/>
</dbReference>
<dbReference type="GeneID" id="851808"/>
<dbReference type="KEGG" id="sce:YDR222W"/>
<dbReference type="AGR" id="SGD:S000002630"/>
<dbReference type="SGD" id="S000002630">
    <property type="gene designation" value="YDR222W"/>
</dbReference>
<dbReference type="VEuPathDB" id="FungiDB:YDR222W"/>
<dbReference type="eggNOG" id="ENOG502QQBB">
    <property type="taxonomic scope" value="Eukaryota"/>
</dbReference>
<dbReference type="GeneTree" id="ENSGT00940000176680"/>
<dbReference type="HOGENOM" id="CLU_030205_0_0_1"/>
<dbReference type="InParanoid" id="Q04925"/>
<dbReference type="OMA" id="CMEFTTT"/>
<dbReference type="OrthoDB" id="2590239at2759"/>
<dbReference type="BioCyc" id="YEAST:G3O-29802-MONOMER"/>
<dbReference type="BioGRID-ORCS" id="851808">
    <property type="hits" value="0 hits in 10 CRISPR screens"/>
</dbReference>
<dbReference type="PRO" id="PR:Q04925"/>
<dbReference type="Proteomes" id="UP000002311">
    <property type="component" value="Chromosome IV"/>
</dbReference>
<dbReference type="RNAct" id="Q04925">
    <property type="molecule type" value="protein"/>
</dbReference>
<dbReference type="GO" id="GO:0005737">
    <property type="term" value="C:cytoplasm"/>
    <property type="evidence" value="ECO:0007005"/>
    <property type="project" value="SGD"/>
</dbReference>
<dbReference type="GO" id="GO:0006979">
    <property type="term" value="P:response to oxidative stress"/>
    <property type="evidence" value="ECO:0007669"/>
    <property type="project" value="InterPro"/>
</dbReference>
<dbReference type="InterPro" id="IPR051385">
    <property type="entry name" value="Ceramide-binding_SVF1"/>
</dbReference>
<dbReference type="InterPro" id="IPR033394">
    <property type="entry name" value="Svf1-like_C"/>
</dbReference>
<dbReference type="InterPro" id="IPR013931">
    <property type="entry name" value="Svf1-like_N"/>
</dbReference>
<dbReference type="PANTHER" id="PTHR47107:SF1">
    <property type="entry name" value="CERAMIDE-BINDING PROTEIN SVF1-RELATED"/>
    <property type="match status" value="1"/>
</dbReference>
<dbReference type="PANTHER" id="PTHR47107">
    <property type="entry name" value="SVF1-LIKE PROTEIN YDR222W-RELATED"/>
    <property type="match status" value="1"/>
</dbReference>
<dbReference type="Pfam" id="PF08622">
    <property type="entry name" value="Svf1"/>
    <property type="match status" value="1"/>
</dbReference>
<dbReference type="Pfam" id="PF17187">
    <property type="entry name" value="Svf1_C"/>
    <property type="match status" value="1"/>
</dbReference>
<comment type="subcellular location">
    <subcellularLocation>
        <location evidence="1">Cytoplasm</location>
    </subcellularLocation>
    <text>Punctate pattern.</text>
</comment>
<comment type="miscellaneous">
    <text evidence="2">Present with 1010 molecules/cell in log phase SD medium.</text>
</comment>
<comment type="similarity">
    <text evidence="3">Belongs to the SVF1 family.</text>
</comment>
<name>YDR22_YEAST</name>
<keyword id="KW-0963">Cytoplasm</keyword>
<keyword id="KW-1185">Reference proteome</keyword>
<accession>Q04925</accession>
<accession>D6VSK4</accession>
<evidence type="ECO:0000269" key="1">
    <source>
    </source>
</evidence>
<evidence type="ECO:0000269" key="2">
    <source>
    </source>
</evidence>
<evidence type="ECO:0000305" key="3"/>
<proteinExistence type="evidence at protein level"/>
<organism>
    <name type="scientific">Saccharomyces cerevisiae (strain ATCC 204508 / S288c)</name>
    <name type="common">Baker's yeast</name>
    <dbReference type="NCBI Taxonomy" id="559292"/>
    <lineage>
        <taxon>Eukaryota</taxon>
        <taxon>Fungi</taxon>
        <taxon>Dikarya</taxon>
        <taxon>Ascomycota</taxon>
        <taxon>Saccharomycotina</taxon>
        <taxon>Saccharomycetes</taxon>
        <taxon>Saccharomycetales</taxon>
        <taxon>Saccharomycetaceae</taxon>
        <taxon>Saccharomyces</taxon>
    </lineage>
</organism>
<gene>
    <name type="ordered locus">YDR222W</name>
</gene>